<name>DNAK_ACIET</name>
<evidence type="ECO:0000255" key="1">
    <source>
        <dbReference type="HAMAP-Rule" id="MF_00332"/>
    </source>
</evidence>
<sequence length="646" mass="69181">MGKIIGIDLGTTNSCVAIMEGNNTRVIENSEGARTTPSIIAYQEDGEILVGASAKRQAVTNPKNTIYAAKRLIGRKFEEKEVQKDIDLMPFTITRADNGDAWVEVRGQKLAPPQISAEVLRKMKKTAEDFLGEPVTEAVITVPAYFNDAQRQATKDAGRIAGLDVKRIINEPTAAALAFGLDKQDKGDRKIAVYDLGGGTFDVSIIEIADVDGEKQFEVLSTNGDTFLGGEDFDQRIIDYIIGEFKKEQGVDLSKDVLALQRLKEAAEKAKIELSNSAQTDINLPYITADASGPKHLNIKLTRAKLESLVDELIERTIAPCRTAIKDAGISVSDINDVILVGGMTRMPKVQEKVKEFFGKEPRKDVNPDEAVAVGAAIQGQVLSGDRKDVLLLDVTPLSLGIETLGGVMTKMITKNTTIPTKFAQTFSTAEDNQPAVTIKVFQGEREIASANKLLGEFNLEGIPPASRGTPQIEVTFDIDANGILHVGAKDKGTGKENKITIKANSGLSEDEIQKMVKDAELNAADDKKKLELVQARNQGEAAVHTVNKSLSEHGDKLDAGEKEKIEAAVKDLEAALKTEDKAAIDEKTTALMAASQKLGEKMYGDAQAAQGAEAAAAQAAAGGSAGAAAQDDNVVDAEVKEVKKG</sequence>
<gene>
    <name evidence="1" type="primary">dnaK</name>
    <name type="ordered locus">Dtpsy_2571</name>
</gene>
<organism>
    <name type="scientific">Acidovorax ebreus (strain TPSY)</name>
    <name type="common">Diaphorobacter sp. (strain TPSY)</name>
    <dbReference type="NCBI Taxonomy" id="535289"/>
    <lineage>
        <taxon>Bacteria</taxon>
        <taxon>Pseudomonadati</taxon>
        <taxon>Pseudomonadota</taxon>
        <taxon>Betaproteobacteria</taxon>
        <taxon>Burkholderiales</taxon>
        <taxon>Comamonadaceae</taxon>
        <taxon>Diaphorobacter</taxon>
    </lineage>
</organism>
<protein>
    <recommendedName>
        <fullName evidence="1">Chaperone protein DnaK</fullName>
    </recommendedName>
    <alternativeName>
        <fullName evidence="1">HSP70</fullName>
    </alternativeName>
    <alternativeName>
        <fullName evidence="1">Heat shock 70 kDa protein</fullName>
    </alternativeName>
    <alternativeName>
        <fullName evidence="1">Heat shock protein 70</fullName>
    </alternativeName>
</protein>
<reference key="1">
    <citation type="submission" date="2009-01" db="EMBL/GenBank/DDBJ databases">
        <title>Complete sequence of Diaphorobacter sp. TPSY.</title>
        <authorList>
            <consortium name="US DOE Joint Genome Institute"/>
            <person name="Lucas S."/>
            <person name="Copeland A."/>
            <person name="Lapidus A."/>
            <person name="Glavina del Rio T."/>
            <person name="Tice H."/>
            <person name="Bruce D."/>
            <person name="Goodwin L."/>
            <person name="Pitluck S."/>
            <person name="Chertkov O."/>
            <person name="Brettin T."/>
            <person name="Detter J.C."/>
            <person name="Han C."/>
            <person name="Larimer F."/>
            <person name="Land M."/>
            <person name="Hauser L."/>
            <person name="Kyrpides N."/>
            <person name="Mikhailova N."/>
            <person name="Coates J.D."/>
        </authorList>
    </citation>
    <scope>NUCLEOTIDE SEQUENCE [LARGE SCALE GENOMIC DNA]</scope>
    <source>
        <strain>TPSY</strain>
    </source>
</reference>
<keyword id="KW-0067">ATP-binding</keyword>
<keyword id="KW-0143">Chaperone</keyword>
<keyword id="KW-0547">Nucleotide-binding</keyword>
<keyword id="KW-0597">Phosphoprotein</keyword>
<keyword id="KW-1185">Reference proteome</keyword>
<keyword id="KW-0346">Stress response</keyword>
<accession>B9MDJ7</accession>
<comment type="function">
    <text evidence="1">Acts as a chaperone.</text>
</comment>
<comment type="induction">
    <text evidence="1">By stress conditions e.g. heat shock.</text>
</comment>
<comment type="similarity">
    <text evidence="1">Belongs to the heat shock protein 70 family.</text>
</comment>
<feature type="chain" id="PRO_1000133144" description="Chaperone protein DnaK">
    <location>
        <begin position="1"/>
        <end position="646"/>
    </location>
</feature>
<feature type="modified residue" description="Phosphothreonine; by autocatalysis" evidence="1">
    <location>
        <position position="200"/>
    </location>
</feature>
<proteinExistence type="inferred from homology"/>
<dbReference type="EMBL" id="CP001392">
    <property type="protein sequence ID" value="ACM34006.1"/>
    <property type="molecule type" value="Genomic_DNA"/>
</dbReference>
<dbReference type="RefSeq" id="WP_015913929.1">
    <property type="nucleotide sequence ID" value="NC_011992.1"/>
</dbReference>
<dbReference type="SMR" id="B9MDJ7"/>
<dbReference type="KEGG" id="dia:Dtpsy_2571"/>
<dbReference type="eggNOG" id="COG0443">
    <property type="taxonomic scope" value="Bacteria"/>
</dbReference>
<dbReference type="HOGENOM" id="CLU_005965_2_1_4"/>
<dbReference type="Proteomes" id="UP000000450">
    <property type="component" value="Chromosome"/>
</dbReference>
<dbReference type="GO" id="GO:0005524">
    <property type="term" value="F:ATP binding"/>
    <property type="evidence" value="ECO:0007669"/>
    <property type="project" value="UniProtKB-UniRule"/>
</dbReference>
<dbReference type="GO" id="GO:0140662">
    <property type="term" value="F:ATP-dependent protein folding chaperone"/>
    <property type="evidence" value="ECO:0007669"/>
    <property type="project" value="InterPro"/>
</dbReference>
<dbReference type="GO" id="GO:0051082">
    <property type="term" value="F:unfolded protein binding"/>
    <property type="evidence" value="ECO:0007669"/>
    <property type="project" value="InterPro"/>
</dbReference>
<dbReference type="CDD" id="cd10234">
    <property type="entry name" value="ASKHA_NBD_HSP70_DnaK-like"/>
    <property type="match status" value="1"/>
</dbReference>
<dbReference type="FunFam" id="2.60.34.10:FF:000014">
    <property type="entry name" value="Chaperone protein DnaK HSP70"/>
    <property type="match status" value="1"/>
</dbReference>
<dbReference type="FunFam" id="3.30.30.30:FF:000003">
    <property type="entry name" value="Heat shock protein 9"/>
    <property type="match status" value="1"/>
</dbReference>
<dbReference type="FunFam" id="1.20.1270.10:FF:000001">
    <property type="entry name" value="Molecular chaperone DnaK"/>
    <property type="match status" value="1"/>
</dbReference>
<dbReference type="FunFam" id="3.30.420.40:FF:000004">
    <property type="entry name" value="Molecular chaperone DnaK"/>
    <property type="match status" value="1"/>
</dbReference>
<dbReference type="FunFam" id="3.90.640.10:FF:000003">
    <property type="entry name" value="Molecular chaperone DnaK"/>
    <property type="match status" value="1"/>
</dbReference>
<dbReference type="Gene3D" id="1.20.1270.10">
    <property type="match status" value="1"/>
</dbReference>
<dbReference type="Gene3D" id="3.30.420.40">
    <property type="match status" value="2"/>
</dbReference>
<dbReference type="Gene3D" id="3.90.640.10">
    <property type="entry name" value="Actin, Chain A, domain 4"/>
    <property type="match status" value="1"/>
</dbReference>
<dbReference type="Gene3D" id="2.60.34.10">
    <property type="entry name" value="Substrate Binding Domain Of DNAk, Chain A, domain 1"/>
    <property type="match status" value="1"/>
</dbReference>
<dbReference type="HAMAP" id="MF_00332">
    <property type="entry name" value="DnaK"/>
    <property type="match status" value="1"/>
</dbReference>
<dbReference type="InterPro" id="IPR043129">
    <property type="entry name" value="ATPase_NBD"/>
</dbReference>
<dbReference type="InterPro" id="IPR012725">
    <property type="entry name" value="Chaperone_DnaK"/>
</dbReference>
<dbReference type="InterPro" id="IPR018181">
    <property type="entry name" value="Heat_shock_70_CS"/>
</dbReference>
<dbReference type="InterPro" id="IPR029048">
    <property type="entry name" value="HSP70_C_sf"/>
</dbReference>
<dbReference type="InterPro" id="IPR029047">
    <property type="entry name" value="HSP70_peptide-bd_sf"/>
</dbReference>
<dbReference type="InterPro" id="IPR013126">
    <property type="entry name" value="Hsp_70_fam"/>
</dbReference>
<dbReference type="NCBIfam" id="NF001413">
    <property type="entry name" value="PRK00290.1"/>
    <property type="match status" value="1"/>
</dbReference>
<dbReference type="NCBIfam" id="NF003520">
    <property type="entry name" value="PRK05183.1"/>
    <property type="match status" value="1"/>
</dbReference>
<dbReference type="NCBIfam" id="TIGR02350">
    <property type="entry name" value="prok_dnaK"/>
    <property type="match status" value="1"/>
</dbReference>
<dbReference type="PANTHER" id="PTHR19375">
    <property type="entry name" value="HEAT SHOCK PROTEIN 70KDA"/>
    <property type="match status" value="1"/>
</dbReference>
<dbReference type="Pfam" id="PF00012">
    <property type="entry name" value="HSP70"/>
    <property type="match status" value="1"/>
</dbReference>
<dbReference type="PRINTS" id="PR00301">
    <property type="entry name" value="HEATSHOCK70"/>
</dbReference>
<dbReference type="SUPFAM" id="SSF53067">
    <property type="entry name" value="Actin-like ATPase domain"/>
    <property type="match status" value="2"/>
</dbReference>
<dbReference type="SUPFAM" id="SSF100934">
    <property type="entry name" value="Heat shock protein 70kD (HSP70), C-terminal subdomain"/>
    <property type="match status" value="1"/>
</dbReference>
<dbReference type="SUPFAM" id="SSF100920">
    <property type="entry name" value="Heat shock protein 70kD (HSP70), peptide-binding domain"/>
    <property type="match status" value="1"/>
</dbReference>
<dbReference type="PROSITE" id="PS00297">
    <property type="entry name" value="HSP70_1"/>
    <property type="match status" value="1"/>
</dbReference>
<dbReference type="PROSITE" id="PS00329">
    <property type="entry name" value="HSP70_2"/>
    <property type="match status" value="1"/>
</dbReference>
<dbReference type="PROSITE" id="PS01036">
    <property type="entry name" value="HSP70_3"/>
    <property type="match status" value="1"/>
</dbReference>